<sequence length="88" mass="10260">MSSFDQTMQFHFSEEPAETNVREVLLTVYGALQEKGYNPINQIVGYLLSGDPAYIPRHKDARALIRKIERDELIEELVKFYLQGQRKD</sequence>
<dbReference type="EMBL" id="BA000043">
    <property type="protein sequence ID" value="BAD76840.1"/>
    <property type="molecule type" value="Genomic_DNA"/>
</dbReference>
<dbReference type="RefSeq" id="WP_011232033.1">
    <property type="nucleotide sequence ID" value="NC_006510.1"/>
</dbReference>
<dbReference type="SMR" id="Q5KWU6"/>
<dbReference type="STRING" id="235909.GK2555"/>
<dbReference type="KEGG" id="gka:GK2555"/>
<dbReference type="eggNOG" id="COG4472">
    <property type="taxonomic scope" value="Bacteria"/>
</dbReference>
<dbReference type="HOGENOM" id="CLU_162466_0_0_9"/>
<dbReference type="Proteomes" id="UP000001172">
    <property type="component" value="Chromosome"/>
</dbReference>
<dbReference type="HAMAP" id="MF_01507">
    <property type="entry name" value="UPF0297"/>
    <property type="match status" value="1"/>
</dbReference>
<dbReference type="InterPro" id="IPR009309">
    <property type="entry name" value="IreB"/>
</dbReference>
<dbReference type="NCBIfam" id="NF003997">
    <property type="entry name" value="PRK05473.1"/>
    <property type="match status" value="1"/>
</dbReference>
<dbReference type="PANTHER" id="PTHR40067">
    <property type="entry name" value="UPF0297 PROTEIN YRZL"/>
    <property type="match status" value="1"/>
</dbReference>
<dbReference type="PANTHER" id="PTHR40067:SF1">
    <property type="entry name" value="UPF0297 PROTEIN YRZL"/>
    <property type="match status" value="1"/>
</dbReference>
<dbReference type="Pfam" id="PF06135">
    <property type="entry name" value="IreB"/>
    <property type="match status" value="1"/>
</dbReference>
<dbReference type="PIRSF" id="PIRSF037258">
    <property type="entry name" value="DUF965_bac"/>
    <property type="match status" value="1"/>
</dbReference>
<protein>
    <recommendedName>
        <fullName evidence="1">UPF0297 protein GK2555</fullName>
    </recommendedName>
</protein>
<organism>
    <name type="scientific">Geobacillus kaustophilus (strain HTA426)</name>
    <dbReference type="NCBI Taxonomy" id="235909"/>
    <lineage>
        <taxon>Bacteria</taxon>
        <taxon>Bacillati</taxon>
        <taxon>Bacillota</taxon>
        <taxon>Bacilli</taxon>
        <taxon>Bacillales</taxon>
        <taxon>Anoxybacillaceae</taxon>
        <taxon>Geobacillus</taxon>
        <taxon>Geobacillus thermoleovorans group</taxon>
    </lineage>
</organism>
<evidence type="ECO:0000255" key="1">
    <source>
        <dbReference type="HAMAP-Rule" id="MF_01507"/>
    </source>
</evidence>
<reference key="1">
    <citation type="journal article" date="2004" name="Nucleic Acids Res.">
        <title>Thermoadaptation trait revealed by the genome sequence of thermophilic Geobacillus kaustophilus.</title>
        <authorList>
            <person name="Takami H."/>
            <person name="Takaki Y."/>
            <person name="Chee G.-J."/>
            <person name="Nishi S."/>
            <person name="Shimamura S."/>
            <person name="Suzuki H."/>
            <person name="Matsui S."/>
            <person name="Uchiyama I."/>
        </authorList>
    </citation>
    <scope>NUCLEOTIDE SEQUENCE [LARGE SCALE GENOMIC DNA]</scope>
    <source>
        <strain>HTA426</strain>
    </source>
</reference>
<feature type="chain" id="PRO_0000216968" description="UPF0297 protein GK2555">
    <location>
        <begin position="1"/>
        <end position="88"/>
    </location>
</feature>
<name>Y2555_GEOKA</name>
<comment type="similarity">
    <text evidence="1">Belongs to the UPF0297 family.</text>
</comment>
<gene>
    <name type="ordered locus">GK2555</name>
</gene>
<proteinExistence type="inferred from homology"/>
<keyword id="KW-1185">Reference proteome</keyword>
<accession>Q5KWU6</accession>